<gene>
    <name type="primary">CENPL</name>
    <name type="ORF">RCJMB04_9b13</name>
</gene>
<sequence>MAGGRPAGSAIEMEGAMRTLPSSGRPSGTGWQSRGPLFGRNYGLSPGSRLLPPRCQENADPQKMAFLLRKQWTLYSVSPLYKFSSADLKDYARMLGVFIAAEKQKGLAVDVDGELGIKVAMSGLPELRGSEQDPAAVLVQLSLRSSVSPKNSEEKLIWSGWFCCVAGDDLLENLPENFTCLPLFLVNGAESYTAIVGSWFQKTFDCCFRRLAISPLNLTWMAAMWTGCKVDKNTAATELLFSVPHLPQPLDISYAIHPEDAKALWDTVQKTPGEITQEEVDVFMECLYSHFHRHFKIHLSATKLVKVSTGIASAHCDGIIKFLQSQYLIGVLMLLTELAISQIQ</sequence>
<feature type="chain" id="PRO_0000249486" description="Centromere protein L">
    <location>
        <begin position="1"/>
        <end position="344"/>
    </location>
</feature>
<feature type="region of interest" description="Disordered" evidence="2">
    <location>
        <begin position="1"/>
        <end position="32"/>
    </location>
</feature>
<feature type="compositionally biased region" description="Polar residues" evidence="2">
    <location>
        <begin position="20"/>
        <end position="32"/>
    </location>
</feature>
<feature type="sequence conflict" description="In Ref. 2; CAG31643." evidence="4" ref="2">
    <original>Q</original>
    <variation>R</variation>
    <location>
        <position position="104"/>
    </location>
</feature>
<feature type="sequence conflict" description="In Ref. 2; CAG31643." evidence="4" ref="2">
    <original>I</original>
    <variation>V</variation>
    <location>
        <position position="117"/>
    </location>
</feature>
<accession>Q1T7C0</accession>
<accession>Q5ZKV0</accession>
<evidence type="ECO:0000250" key="1"/>
<evidence type="ECO:0000256" key="2">
    <source>
        <dbReference type="SAM" id="MobiDB-lite"/>
    </source>
</evidence>
<evidence type="ECO:0000269" key="3">
    <source>
    </source>
</evidence>
<evidence type="ECO:0000305" key="4"/>
<organism>
    <name type="scientific">Gallus gallus</name>
    <name type="common">Chicken</name>
    <dbReference type="NCBI Taxonomy" id="9031"/>
    <lineage>
        <taxon>Eukaryota</taxon>
        <taxon>Metazoa</taxon>
        <taxon>Chordata</taxon>
        <taxon>Craniata</taxon>
        <taxon>Vertebrata</taxon>
        <taxon>Euteleostomi</taxon>
        <taxon>Archelosauria</taxon>
        <taxon>Archosauria</taxon>
        <taxon>Dinosauria</taxon>
        <taxon>Saurischia</taxon>
        <taxon>Theropoda</taxon>
        <taxon>Coelurosauria</taxon>
        <taxon>Aves</taxon>
        <taxon>Neognathae</taxon>
        <taxon>Galloanserae</taxon>
        <taxon>Galliformes</taxon>
        <taxon>Phasianidae</taxon>
        <taxon>Phasianinae</taxon>
        <taxon>Gallus</taxon>
    </lineage>
</organism>
<name>CENPL_CHICK</name>
<proteinExistence type="evidence at protein level"/>
<dbReference type="EMBL" id="AB231848">
    <property type="protein sequence ID" value="BAE93413.1"/>
    <property type="molecule type" value="mRNA"/>
</dbReference>
<dbReference type="EMBL" id="AJ719984">
    <property type="protein sequence ID" value="CAG31643.1"/>
    <property type="molecule type" value="mRNA"/>
</dbReference>
<dbReference type="RefSeq" id="NP_001006569.3">
    <property type="nucleotide sequence ID" value="NM_001006569.4"/>
</dbReference>
<dbReference type="SMR" id="Q1T7C0"/>
<dbReference type="BioGRID" id="686144">
    <property type="interactions" value="2"/>
</dbReference>
<dbReference type="FunCoup" id="Q1T7C0">
    <property type="interactions" value="1369"/>
</dbReference>
<dbReference type="IntAct" id="Q1T7C0">
    <property type="interactions" value="1"/>
</dbReference>
<dbReference type="STRING" id="9031.ENSGALP00000062160"/>
<dbReference type="PaxDb" id="9031-ENSGALP00000043253"/>
<dbReference type="Ensembl" id="ENSGALT00010025682.1">
    <property type="protein sequence ID" value="ENSGALP00010014474.1"/>
    <property type="gene ID" value="ENSGALG00010010756.1"/>
</dbReference>
<dbReference type="GeneID" id="426563"/>
<dbReference type="KEGG" id="gga:426563"/>
<dbReference type="CTD" id="91687"/>
<dbReference type="VEuPathDB" id="HostDB:geneid_426563"/>
<dbReference type="eggNOG" id="ENOG502QS38">
    <property type="taxonomic scope" value="Eukaryota"/>
</dbReference>
<dbReference type="GeneTree" id="ENSGT00390000013877"/>
<dbReference type="InParanoid" id="Q1T7C0"/>
<dbReference type="OMA" id="TACKMDQ"/>
<dbReference type="OrthoDB" id="8864979at2759"/>
<dbReference type="PhylomeDB" id="Q1T7C0"/>
<dbReference type="Reactome" id="R-GGA-141444">
    <property type="pathway name" value="Amplification of signal from unattached kinetochores via a MAD2 inhibitory signal"/>
</dbReference>
<dbReference type="Reactome" id="R-GGA-2467813">
    <property type="pathway name" value="Separation of Sister Chromatids"/>
</dbReference>
<dbReference type="Reactome" id="R-GGA-2500257">
    <property type="pathway name" value="Resolution of Sister Chromatid Cohesion"/>
</dbReference>
<dbReference type="Reactome" id="R-GGA-5663220">
    <property type="pathway name" value="RHO GTPases Activate Formins"/>
</dbReference>
<dbReference type="Reactome" id="R-GGA-606279">
    <property type="pathway name" value="Deposition of new CENPA-containing nucleosomes at the centromere"/>
</dbReference>
<dbReference type="Reactome" id="R-GGA-9648025">
    <property type="pathway name" value="EML4 and NUDC in mitotic spindle formation"/>
</dbReference>
<dbReference type="PRO" id="PR:Q1T7C0"/>
<dbReference type="Proteomes" id="UP000000539">
    <property type="component" value="Chromosome 8"/>
</dbReference>
<dbReference type="Bgee" id="ENSGALG00000038411">
    <property type="expression patterns" value="Expressed in spermatid and 5 other cell types or tissues"/>
</dbReference>
<dbReference type="GO" id="GO:0000939">
    <property type="term" value="C:inner kinetochore"/>
    <property type="evidence" value="ECO:0007669"/>
    <property type="project" value="Ensembl"/>
</dbReference>
<dbReference type="GO" id="GO:0005634">
    <property type="term" value="C:nucleus"/>
    <property type="evidence" value="ECO:0007669"/>
    <property type="project" value="UniProtKB-SubCell"/>
</dbReference>
<dbReference type="InterPro" id="IPR025204">
    <property type="entry name" value="CENP-L"/>
</dbReference>
<dbReference type="PANTHER" id="PTHR31740">
    <property type="entry name" value="CENTROMERE PROTEIN L"/>
    <property type="match status" value="1"/>
</dbReference>
<dbReference type="PANTHER" id="PTHR31740:SF2">
    <property type="entry name" value="CENTROMERE PROTEIN L"/>
    <property type="match status" value="1"/>
</dbReference>
<dbReference type="Pfam" id="PF13092">
    <property type="entry name" value="CENP-L"/>
    <property type="match status" value="1"/>
</dbReference>
<keyword id="KW-0137">Centromere</keyword>
<keyword id="KW-0158">Chromosome</keyword>
<keyword id="KW-0539">Nucleus</keyword>
<keyword id="KW-1185">Reference proteome</keyword>
<reference key="1">
    <citation type="journal article" date="2006" name="Nat. Cell Biol.">
        <title>The CENP-H-I complex is required for the efficient incorporation of newly synthesized CENP-A into centromeres.</title>
        <authorList>
            <person name="Okada M."/>
            <person name="Cheeseman I.M."/>
            <person name="Hori T."/>
            <person name="Okawa K."/>
            <person name="McLeod I.X."/>
            <person name="Yates J.R. III"/>
            <person name="Desai A."/>
            <person name="Fukagawa T."/>
        </authorList>
    </citation>
    <scope>NUCLEOTIDE SEQUENCE [MRNA]</scope>
    <scope>IDENTIFICATION BY MASS SPECTROMETRY</scope>
    <scope>IDENTIFICATION IN A COMPLEX WITH CENPH; CENPI; CENPK; CENPM; CENPO AND CENPP</scope>
</reference>
<reference key="2">
    <citation type="journal article" date="2005" name="Genome Biol.">
        <title>Full-length cDNAs from chicken bursal lymphocytes to facilitate gene function analysis.</title>
        <authorList>
            <person name="Caldwell R.B."/>
            <person name="Kierzek A.M."/>
            <person name="Arakawa H."/>
            <person name="Bezzubov Y."/>
            <person name="Zaim J."/>
            <person name="Fiedler P."/>
            <person name="Kutter S."/>
            <person name="Blagodatski A."/>
            <person name="Kostovska D."/>
            <person name="Koter M."/>
            <person name="Plachy J."/>
            <person name="Carninci P."/>
            <person name="Hayashizaki Y."/>
            <person name="Buerstedde J.-M."/>
        </authorList>
    </citation>
    <scope>NUCLEOTIDE SEQUENCE [LARGE SCALE MRNA]</scope>
    <source>
        <strain>CB</strain>
        <tissue>Bursa of Fabricius</tissue>
    </source>
</reference>
<protein>
    <recommendedName>
        <fullName>Centromere protein L</fullName>
        <shortName>CENP-L</shortName>
    </recommendedName>
</protein>
<comment type="function">
    <text evidence="1">Component of the CENPA-HI complex, a centromeric complex involved in assembly of kinetochore proteins, mitotic progression and chromosome segregation.</text>
</comment>
<comment type="subunit">
    <text evidence="3">Component of the CENPA-HI complex, at least composed of CENPH, CENPI, CENPK, CENPL, CENPM, CENPO and CENPP.</text>
</comment>
<comment type="subcellular location">
    <subcellularLocation>
        <location evidence="4">Nucleus</location>
    </subcellularLocation>
    <subcellularLocation>
        <location evidence="4">Chromosome</location>
        <location evidence="4">Centromere</location>
    </subcellularLocation>
    <text evidence="4">Localizes exclusively in the centromeres.</text>
</comment>
<comment type="similarity">
    <text evidence="4">Belongs to the CENP-L/IML3 family.</text>
</comment>